<comment type="function">
    <text evidence="1 3 5">Photosystem II (PSII) is a light-driven water:plastoquinone oxidoreductase that uses light energy to abstract electrons from H(2)O, generating O(2) and a proton gradient subsequently used for ATP formation. It consists of a core antenna complex that captures photons, and an electron transfer chain that converts photonic excitation into a charge separation. The D1/D2 (PsbA/PsbD) reaction center heterodimer binds P680, the primary electron donor of PSII as well as several subsequent electron acceptors (PubMed:19433803, PubMed:23426624). D2 is needed for assembly of a stable PSII complex.</text>
</comment>
<comment type="catalytic activity">
    <reaction evidence="1">
        <text>2 a plastoquinone + 4 hnu + 2 H2O = 2 a plastoquinol + O2</text>
        <dbReference type="Rhea" id="RHEA:36359"/>
        <dbReference type="Rhea" id="RHEA-COMP:9561"/>
        <dbReference type="Rhea" id="RHEA-COMP:9562"/>
        <dbReference type="ChEBI" id="CHEBI:15377"/>
        <dbReference type="ChEBI" id="CHEBI:15379"/>
        <dbReference type="ChEBI" id="CHEBI:17757"/>
        <dbReference type="ChEBI" id="CHEBI:30212"/>
        <dbReference type="ChEBI" id="CHEBI:62192"/>
        <dbReference type="EC" id="1.10.3.9"/>
    </reaction>
</comment>
<comment type="cofactor">
    <text evidence="1 2 3 4 5">The D1/D2 heterodimer binds P680, chlorophylls that are the primary electron donor of PSII, and subsequent electron acceptors. It shares a non-heme iron and each subunit binds pheophytin, quinone, additional chlorophylls, carotenoids and lipids. There is also a Cl(-1) ion associated with D1 and D2, which is required for oxygen evolution. The PSII complex binds additional chlorophylls, carotenoids and specific lipids.</text>
</comment>
<comment type="subunit">
    <text evidence="1 2 3 4 5">PSII is composed of 1 copy each of membrane proteins PsbA, PsbB, PsbC, PsbD, PsbE, PsbF, PsbH, PsbI, PsbJ, PsbK, PsbL, PsbM, PsbT, PsbX, PsbY, PsbZ, Psb30/Ycf12, peripheral proteins PsbO, CyanoQ (PsbQ), PsbU, PsbV and a large number of cofactors. It forms dimeric complexes.</text>
</comment>
<comment type="subcellular location">
    <subcellularLocation>
        <location evidence="1 2 3 4 5">Cellular thylakoid membrane</location>
        <topology evidence="1 2 3 4 5">Multi-pass membrane protein</topology>
    </subcellularLocation>
</comment>
<comment type="miscellaneous">
    <text evidence="1 4">2 of the reaction center chlorophylls (ChlD1 and ChlD2) are entirely coordinated by water.</text>
</comment>
<comment type="similarity">
    <text evidence="1">Belongs to the reaction center PufL/M/PsbA/D family.</text>
</comment>
<reference key="1">
    <citation type="journal article" date="2003" name="Proc. Natl. Acad. Sci. U.S.A.">
        <title>Crystal structure of oxygen-evolving photosystem II from Thermosynechococcus vulcanus at 3.7-A resolution.</title>
        <authorList>
            <person name="Kamiya N."/>
            <person name="Shen J.-R."/>
        </authorList>
    </citation>
    <scope>X-RAY CRYSTALLOGRAPHY (3.7 ANGSTROMS) IN PHOTOSYSTEM II</scope>
    <scope>COFACTOR</scope>
    <scope>SUBUNIT</scope>
    <scope>SUBCELLULAR LOCATION</scope>
</reference>
<reference key="2">
    <citation type="journal article" date="2009" name="Proc. Natl. Acad. Sci. U.S.A.">
        <title>Location of chloride and its possible functions in oxygen-evolving photosystem II revealed by X-ray crystallography.</title>
        <authorList>
            <person name="Kawakami K."/>
            <person name="Umena Y."/>
            <person name="Kamiya N."/>
            <person name="Shen J.R."/>
        </authorList>
    </citation>
    <scope>X-RAY CRYSTALLOGRAPHY (3.70 ANGSTROMS) OF 3-342 IN COMPLEX WITH CHLOROPHYLL A AND IRON IN PHOTOSYSTEM II</scope>
    <scope>FUNCTION</scope>
    <scope>COFACTOR</scope>
    <scope>SUBUNIT</scope>
    <scope>SUBCELLULAR LOCATION</scope>
    <scope>POSSIBLE CL(-) LIGAND</scope>
</reference>
<reference key="3">
    <citation type="journal article" date="2011" name="Nature">
        <title>Crystal structure of oxygen-evolving photosystem II at a resolution of 1.9 A.</title>
        <authorList>
            <person name="Umena Y."/>
            <person name="Kawakami K."/>
            <person name="Shen J.R."/>
            <person name="Kamiya N."/>
        </authorList>
    </citation>
    <scope>X-RAY CRYSTALLOGRAPHY (1.90 ANGSTROMS) OF 3-342 IN COMPLEX WITH CHLOROPHYLL A; BETA-CAROTENE AND PHEOPHYTIN A IN PHOTOSYSTEM II</scope>
    <scope>COFACTOR</scope>
    <scope>SUBUNIT</scope>
    <scope>SUBCELLULAR LOCATION</scope>
    <scope>TOPOLOGY</scope>
</reference>
<reference key="4">
    <citation type="journal article" date="2013" name="Proc. Natl. Acad. Sci. U.S.A.">
        <title>Structure of Sr-substituted photosystem II at 2.1 A resolution and its implications in the mechanism of water oxidation.</title>
        <authorList>
            <person name="Koua F.H."/>
            <person name="Umena Y."/>
            <person name="Kawakami K."/>
            <person name="Shen J.R."/>
        </authorList>
    </citation>
    <scope>X-RAY CRYSTALLOGRAPHY (2.1 ANGSTROMS) IN PHOTOSYSTEM II</scope>
    <scope>FUNCTION</scope>
    <scope>COFACTOR</scope>
    <scope>SUBUNIT</scope>
    <scope>SUBCELLULAR LOCATION</scope>
</reference>
<name>PSBD_THEVL</name>
<accession>D0VWR8</accession>
<protein>
    <recommendedName>
        <fullName evidence="1">Photosystem II D2 protein</fullName>
        <shortName evidence="1">PSII D2 protein</shortName>
        <ecNumber evidence="1">1.10.3.9</ecNumber>
    </recommendedName>
    <alternativeName>
        <fullName evidence="1">Photosystem Q(A) protein</fullName>
    </alternativeName>
</protein>
<sequence length="342" mass="38379">ERGWFDILDDWLKRDRFVFVGWSGILLFPCAYLALGGWLTGTTFVTSWYTHGLASSYLEGCNFLTVAVSTPANSMGHSLLLLWGPEAQGDFTRWCQLGGLWTFIALHGAFGLIGFMLRQFEIARLVGVRPYNAIAFSAPIAVFVSVFLIYPLGQSSWFFAPSFGVAAIFRFLLFFQGFHNWTLNPFHMMGVAGVLGGALLCAIHGATVENTLFQDGEGASTFRAFNPTQAEETYSMVTANRFWSQIFGIAFSNKRWLHFFMLFVPVTGLWMSAIGVVGLALNLRSYDFISQEIRAAEDPEFETFYTKNLLLNEGIRAWMAPQDQPHENFVFPEEVLPRGNAL</sequence>
<feature type="chain" id="PRO_0000422602" description="Photosystem II D2 protein">
    <location>
        <begin position="1"/>
        <end position="342"/>
    </location>
</feature>
<feature type="topological domain" description="Cytoplasmic" evidence="4">
    <location>
        <begin position="1"/>
        <end position="29"/>
    </location>
</feature>
<feature type="transmembrane region" description="Helical" evidence="1 4">
    <location>
        <begin position="30"/>
        <end position="50"/>
    </location>
</feature>
<feature type="topological domain" description="Lumenal" evidence="4">
    <location>
        <begin position="51"/>
        <end position="113"/>
    </location>
</feature>
<feature type="transmembrane region" description="Helical" evidence="1 4">
    <location>
        <begin position="114"/>
        <end position="130"/>
    </location>
</feature>
<feature type="topological domain" description="Cytoplasmic" evidence="4">
    <location>
        <begin position="131"/>
        <end position="141"/>
    </location>
</feature>
<feature type="transmembrane region" description="Helical" evidence="1 4">
    <location>
        <begin position="142"/>
        <end position="155"/>
    </location>
</feature>
<feature type="topological domain" description="Lumenal" evidence="4">
    <location>
        <begin position="156"/>
        <end position="196"/>
    </location>
</feature>
<feature type="transmembrane region" description="Helical" evidence="1 4">
    <location>
        <begin position="197"/>
        <end position="217"/>
    </location>
</feature>
<feature type="topological domain" description="Cytoplasmic" evidence="4">
    <location>
        <begin position="218"/>
        <end position="267"/>
    </location>
</feature>
<feature type="transmembrane region" description="Helical" evidence="1 4">
    <location>
        <begin position="268"/>
        <end position="284"/>
    </location>
</feature>
<feature type="topological domain" description="Lumenal" evidence="4">
    <location>
        <begin position="285"/>
        <end position="342"/>
    </location>
</feature>
<feature type="binding site" description="axial binding residue" evidence="1 5">
    <location>
        <position position="107"/>
    </location>
    <ligand>
        <name>chlorophyll a</name>
        <dbReference type="ChEBI" id="CHEBI:58416"/>
        <label>ChlzD2</label>
    </ligand>
    <ligandPart>
        <name>Mg</name>
        <dbReference type="ChEBI" id="CHEBI:25107"/>
    </ligandPart>
</feature>
<feature type="binding site" evidence="1 4 5">
    <location>
        <position position="119"/>
    </location>
    <ligand>
        <name>pheophytin a</name>
        <dbReference type="ChEBI" id="CHEBI:136840"/>
        <label>D2</label>
    </ligand>
</feature>
<feature type="binding site" evidence="1 4 5 6">
    <location>
        <position position="132"/>
    </location>
    <ligand>
        <name>pheophytin a</name>
        <dbReference type="ChEBI" id="CHEBI:136840"/>
        <label>D2</label>
    </ligand>
</feature>
<feature type="binding site" description="axial binding residue" evidence="1 4 5">
    <location>
        <position position="187"/>
    </location>
    <ligand>
        <name>chlorophyll a</name>
        <dbReference type="ChEBI" id="CHEBI:58416"/>
        <label>PD2</label>
    </ligand>
    <ligandPart>
        <name>Mg</name>
        <dbReference type="ChEBI" id="CHEBI:25107"/>
    </ligandPart>
</feature>
<feature type="binding site" evidence="1 4 5 6">
    <location>
        <position position="204"/>
    </location>
    <ligand>
        <name>a plastoquinone</name>
        <dbReference type="ChEBI" id="CHEBI:17757"/>
        <label>Q(A)</label>
    </ligand>
</feature>
<feature type="binding site" evidence="1 4 5 6">
    <location>
        <position position="204"/>
    </location>
    <ligand>
        <name>Fe cation</name>
        <dbReference type="ChEBI" id="CHEBI:24875"/>
        <note>ligand shared with heterodimeric partner</note>
    </ligand>
</feature>
<feature type="binding site" evidence="1 4 5">
    <location>
        <position position="251"/>
    </location>
    <ligand>
        <name>a plastoquinone</name>
        <dbReference type="ChEBI" id="CHEBI:17757"/>
        <label>Q(A)</label>
    </ligand>
</feature>
<feature type="binding site" evidence="1 4 5 6">
    <location>
        <position position="258"/>
    </location>
    <ligand>
        <name>Fe cation</name>
        <dbReference type="ChEBI" id="CHEBI:24875"/>
        <note>ligand shared with heterodimeric partner</note>
    </ligand>
</feature>
<feature type="non-terminal residue">
    <location>
        <position position="1"/>
    </location>
</feature>
<feature type="helix" evidence="8">
    <location>
        <begin position="4"/>
        <end position="12"/>
    </location>
</feature>
<feature type="helix" evidence="8">
    <location>
        <begin position="21"/>
        <end position="44"/>
    </location>
</feature>
<feature type="helix" evidence="8">
    <location>
        <begin position="48"/>
        <end position="51"/>
    </location>
</feature>
<feature type="helix" evidence="8">
    <location>
        <begin position="57"/>
        <end position="59"/>
    </location>
</feature>
<feature type="turn" evidence="8">
    <location>
        <begin position="63"/>
        <end position="65"/>
    </location>
</feature>
<feature type="helix" evidence="8">
    <location>
        <begin position="73"/>
        <end position="75"/>
    </location>
</feature>
<feature type="turn" evidence="8">
    <location>
        <begin position="85"/>
        <end position="89"/>
    </location>
</feature>
<feature type="helix" evidence="8">
    <location>
        <begin position="91"/>
        <end position="96"/>
    </location>
</feature>
<feature type="helix" evidence="8">
    <location>
        <begin position="99"/>
        <end position="126"/>
    </location>
</feature>
<feature type="helix" evidence="8">
    <location>
        <begin position="131"/>
        <end position="147"/>
    </location>
</feature>
<feature type="helix" evidence="8">
    <location>
        <begin position="149"/>
        <end position="153"/>
    </location>
</feature>
<feature type="strand" evidence="8">
    <location>
        <begin position="154"/>
        <end position="156"/>
    </location>
</feature>
<feature type="helix" evidence="8">
    <location>
        <begin position="157"/>
        <end position="159"/>
    </location>
</feature>
<feature type="helix" evidence="8">
    <location>
        <begin position="165"/>
        <end position="179"/>
    </location>
</feature>
<feature type="helix" evidence="8">
    <location>
        <begin position="181"/>
        <end position="183"/>
    </location>
</feature>
<feature type="helix" evidence="8">
    <location>
        <begin position="185"/>
        <end position="210"/>
    </location>
</feature>
<feature type="strand" evidence="8">
    <location>
        <begin position="211"/>
        <end position="213"/>
    </location>
</feature>
<feature type="strand" evidence="10">
    <location>
        <begin position="216"/>
        <end position="219"/>
    </location>
</feature>
<feature type="helix" evidence="7">
    <location>
        <begin position="221"/>
        <end position="224"/>
    </location>
</feature>
<feature type="helix" evidence="9">
    <location>
        <begin position="226"/>
        <end position="228"/>
    </location>
</feature>
<feature type="turn" evidence="9">
    <location>
        <begin position="229"/>
        <end position="232"/>
    </location>
</feature>
<feature type="helix" evidence="8">
    <location>
        <begin position="236"/>
        <end position="247"/>
    </location>
</feature>
<feature type="helix" evidence="8">
    <location>
        <begin position="254"/>
        <end position="280"/>
    </location>
</feature>
<feature type="helix" evidence="8">
    <location>
        <begin position="289"/>
        <end position="297"/>
    </location>
</feature>
<feature type="helix" evidence="8">
    <location>
        <begin position="304"/>
        <end position="323"/>
    </location>
</feature>
<feature type="helix" evidence="8">
    <location>
        <begin position="325"/>
        <end position="327"/>
    </location>
</feature>
<feature type="helix" evidence="8">
    <location>
        <begin position="333"/>
        <end position="335"/>
    </location>
</feature>
<proteinExistence type="evidence at protein level"/>
<evidence type="ECO:0000255" key="1">
    <source>
        <dbReference type="HAMAP-Rule" id="MF_01383"/>
    </source>
</evidence>
<evidence type="ECO:0000269" key="2">
    <source>
    </source>
</evidence>
<evidence type="ECO:0000269" key="3">
    <source>
    </source>
</evidence>
<evidence type="ECO:0000269" key="4">
    <source>
    </source>
</evidence>
<evidence type="ECO:0000269" key="5">
    <source>
    </source>
</evidence>
<evidence type="ECO:0000303" key="6">
    <source>
    </source>
</evidence>
<evidence type="ECO:0007829" key="7">
    <source>
        <dbReference type="PDB" id="3WU2"/>
    </source>
</evidence>
<evidence type="ECO:0007829" key="8">
    <source>
        <dbReference type="PDB" id="5B66"/>
    </source>
</evidence>
<evidence type="ECO:0007829" key="9">
    <source>
        <dbReference type="PDB" id="7DXA"/>
    </source>
</evidence>
<evidence type="ECO:0007829" key="10">
    <source>
        <dbReference type="PDB" id="8IR5"/>
    </source>
</evidence>
<gene>
    <name evidence="1" type="primary">psbD</name>
</gene>
<keyword id="KW-0002">3D-structure</keyword>
<keyword id="KW-0148">Chlorophyll</keyword>
<keyword id="KW-0157">Chromophore</keyword>
<keyword id="KW-0249">Electron transport</keyword>
<keyword id="KW-0408">Iron</keyword>
<keyword id="KW-0460">Magnesium</keyword>
<keyword id="KW-0472">Membrane</keyword>
<keyword id="KW-0479">Metal-binding</keyword>
<keyword id="KW-0560">Oxidoreductase</keyword>
<keyword id="KW-0602">Photosynthesis</keyword>
<keyword id="KW-0604">Photosystem II</keyword>
<keyword id="KW-0793">Thylakoid</keyword>
<keyword id="KW-0812">Transmembrane</keyword>
<keyword id="KW-1133">Transmembrane helix</keyword>
<keyword id="KW-0813">Transport</keyword>
<dbReference type="EC" id="1.10.3.9" evidence="1"/>
<dbReference type="PDB" id="1IZL">
    <property type="method" value="X-ray"/>
    <property type="resolution" value="3.70 A"/>
    <property type="chains" value="D/N=1-342"/>
</dbReference>
<dbReference type="PDB" id="3A0B">
    <property type="method" value="X-ray"/>
    <property type="resolution" value="3.70 A"/>
    <property type="chains" value="D/d=3-342"/>
</dbReference>
<dbReference type="PDB" id="3A0H">
    <property type="method" value="X-ray"/>
    <property type="resolution" value="4.00 A"/>
    <property type="chains" value="D/d=3-342"/>
</dbReference>
<dbReference type="PDB" id="3WU2">
    <property type="method" value="X-ray"/>
    <property type="resolution" value="1.90 A"/>
    <property type="chains" value="D/d=1-342"/>
</dbReference>
<dbReference type="PDB" id="4IL6">
    <property type="method" value="X-ray"/>
    <property type="resolution" value="2.10 A"/>
    <property type="chains" value="D/d=1-342"/>
</dbReference>
<dbReference type="PDB" id="4UB6">
    <property type="method" value="X-ray"/>
    <property type="resolution" value="1.95 A"/>
    <property type="chains" value="D/d=1-342"/>
</dbReference>
<dbReference type="PDB" id="4UB8">
    <property type="method" value="X-ray"/>
    <property type="resolution" value="1.95 A"/>
    <property type="chains" value="D/d=1-342"/>
</dbReference>
<dbReference type="PDB" id="5B5E">
    <property type="method" value="X-ray"/>
    <property type="resolution" value="1.87 A"/>
    <property type="chains" value="D/d=1-342"/>
</dbReference>
<dbReference type="PDB" id="5B66">
    <property type="method" value="X-ray"/>
    <property type="resolution" value="1.85 A"/>
    <property type="chains" value="D/d=1-342"/>
</dbReference>
<dbReference type="PDB" id="5GTH">
    <property type="method" value="X-ray"/>
    <property type="resolution" value="2.50 A"/>
    <property type="chains" value="D/d=1-342"/>
</dbReference>
<dbReference type="PDB" id="5GTI">
    <property type="method" value="X-ray"/>
    <property type="resolution" value="2.50 A"/>
    <property type="chains" value="D/d=1-342"/>
</dbReference>
<dbReference type="PDB" id="5V2C">
    <property type="method" value="X-ray"/>
    <property type="resolution" value="1.90 A"/>
    <property type="chains" value="D/d=1-342"/>
</dbReference>
<dbReference type="PDB" id="5WS5">
    <property type="method" value="X-ray"/>
    <property type="resolution" value="2.35 A"/>
    <property type="chains" value="D/d=1-342"/>
</dbReference>
<dbReference type="PDB" id="5WS6">
    <property type="method" value="X-ray"/>
    <property type="resolution" value="2.35 A"/>
    <property type="chains" value="D/d=1-342"/>
</dbReference>
<dbReference type="PDB" id="6JLJ">
    <property type="method" value="X-ray"/>
    <property type="resolution" value="2.15 A"/>
    <property type="chains" value="D/d=1-342"/>
</dbReference>
<dbReference type="PDB" id="6JLK">
    <property type="method" value="X-ray"/>
    <property type="resolution" value="2.15 A"/>
    <property type="chains" value="D/d=1-342"/>
</dbReference>
<dbReference type="PDB" id="6JLL">
    <property type="method" value="X-ray"/>
    <property type="resolution" value="2.15 A"/>
    <property type="chains" value="D/d=1-342"/>
</dbReference>
<dbReference type="PDB" id="6JLM">
    <property type="method" value="X-ray"/>
    <property type="resolution" value="2.35 A"/>
    <property type="chains" value="D/d=1-342"/>
</dbReference>
<dbReference type="PDB" id="6JLN">
    <property type="method" value="X-ray"/>
    <property type="resolution" value="2.40 A"/>
    <property type="chains" value="D/d=1-342"/>
</dbReference>
<dbReference type="PDB" id="6JLO">
    <property type="method" value="X-ray"/>
    <property type="resolution" value="2.40 A"/>
    <property type="chains" value="D/d=1-342"/>
</dbReference>
<dbReference type="PDB" id="6JLP">
    <property type="method" value="X-ray"/>
    <property type="resolution" value="2.50 A"/>
    <property type="chains" value="D/d=1-342"/>
</dbReference>
<dbReference type="PDB" id="7CJI">
    <property type="method" value="X-ray"/>
    <property type="resolution" value="2.35 A"/>
    <property type="chains" value="D/d=1-342"/>
</dbReference>
<dbReference type="PDB" id="7CJJ">
    <property type="method" value="X-ray"/>
    <property type="resolution" value="2.40 A"/>
    <property type="chains" value="D/d=1-342"/>
</dbReference>
<dbReference type="PDB" id="7COU">
    <property type="method" value="X-ray"/>
    <property type="resolution" value="2.25 A"/>
    <property type="chains" value="D/d=1-342"/>
</dbReference>
<dbReference type="PDB" id="7CZL">
    <property type="method" value="EM"/>
    <property type="resolution" value="3.78 A"/>
    <property type="chains" value="D/d=3-341"/>
</dbReference>
<dbReference type="PDB" id="7D1T">
    <property type="method" value="EM"/>
    <property type="resolution" value="1.95 A"/>
    <property type="chains" value="D/d=1-342"/>
</dbReference>
<dbReference type="PDB" id="7D1U">
    <property type="method" value="EM"/>
    <property type="resolution" value="2.08 A"/>
    <property type="chains" value="D/d=1-342"/>
</dbReference>
<dbReference type="PDB" id="7DXA">
    <property type="method" value="EM"/>
    <property type="resolution" value="3.14 A"/>
    <property type="chains" value="d=1-342"/>
</dbReference>
<dbReference type="PDB" id="7DXH">
    <property type="method" value="EM"/>
    <property type="resolution" value="3.14 A"/>
    <property type="chains" value="d=1-342"/>
</dbReference>
<dbReference type="PDB" id="7EDA">
    <property type="method" value="EM"/>
    <property type="resolution" value="2.78 A"/>
    <property type="chains" value="D=2-342"/>
</dbReference>
<dbReference type="PDB" id="8GN0">
    <property type="method" value="X-ray"/>
    <property type="resolution" value="2.15 A"/>
    <property type="chains" value="D/d=1-342"/>
</dbReference>
<dbReference type="PDB" id="8GN1">
    <property type="method" value="X-ray"/>
    <property type="resolution" value="2.10 A"/>
    <property type="chains" value="D/d=1-342"/>
</dbReference>
<dbReference type="PDB" id="8GN2">
    <property type="method" value="X-ray"/>
    <property type="resolution" value="1.95 A"/>
    <property type="chains" value="D/d=1-342"/>
</dbReference>
<dbReference type="PDB" id="8IR5">
    <property type="method" value="X-ray"/>
    <property type="resolution" value="2.15 A"/>
    <property type="chains" value="D/d=1-342"/>
</dbReference>
<dbReference type="PDB" id="8IR6">
    <property type="method" value="X-ray"/>
    <property type="resolution" value="2.20 A"/>
    <property type="chains" value="D/d=1-342"/>
</dbReference>
<dbReference type="PDB" id="8IR7">
    <property type="method" value="X-ray"/>
    <property type="resolution" value="2.25 A"/>
    <property type="chains" value="D/d=1-342"/>
</dbReference>
<dbReference type="PDB" id="8IR8">
    <property type="method" value="X-ray"/>
    <property type="resolution" value="2.25 A"/>
    <property type="chains" value="D/d=1-342"/>
</dbReference>
<dbReference type="PDB" id="8IR9">
    <property type="method" value="X-ray"/>
    <property type="resolution" value="2.20 A"/>
    <property type="chains" value="D/d=1-342"/>
</dbReference>
<dbReference type="PDB" id="8IRA">
    <property type="method" value="X-ray"/>
    <property type="resolution" value="2.20 A"/>
    <property type="chains" value="D/d=1-342"/>
</dbReference>
<dbReference type="PDB" id="8IRB">
    <property type="method" value="X-ray"/>
    <property type="resolution" value="2.30 A"/>
    <property type="chains" value="D/d=1-342"/>
</dbReference>
<dbReference type="PDB" id="8IRC">
    <property type="method" value="X-ray"/>
    <property type="resolution" value="2.25 A"/>
    <property type="chains" value="D/d=1-342"/>
</dbReference>
<dbReference type="PDB" id="8IRD">
    <property type="method" value="X-ray"/>
    <property type="resolution" value="2.30 A"/>
    <property type="chains" value="D/d=1-342"/>
</dbReference>
<dbReference type="PDB" id="8IRE">
    <property type="method" value="X-ray"/>
    <property type="resolution" value="2.25 A"/>
    <property type="chains" value="D/d=1-342"/>
</dbReference>
<dbReference type="PDB" id="8IRF">
    <property type="method" value="X-ray"/>
    <property type="resolution" value="2.25 A"/>
    <property type="chains" value="D/d=1-342"/>
</dbReference>
<dbReference type="PDB" id="8IRG">
    <property type="method" value="X-ray"/>
    <property type="resolution" value="2.30 A"/>
    <property type="chains" value="D/d=1-342"/>
</dbReference>
<dbReference type="PDB" id="8IRH">
    <property type="method" value="X-ray"/>
    <property type="resolution" value="2.25 A"/>
    <property type="chains" value="D/d=1-342"/>
</dbReference>
<dbReference type="PDB" id="8IRI">
    <property type="method" value="X-ray"/>
    <property type="resolution" value="2.25 A"/>
    <property type="chains" value="D/d=1-342"/>
</dbReference>
<dbReference type="PDBsum" id="1IZL"/>
<dbReference type="PDBsum" id="3A0B"/>
<dbReference type="PDBsum" id="3A0H"/>
<dbReference type="PDBsum" id="3WU2"/>
<dbReference type="PDBsum" id="4IL6"/>
<dbReference type="PDBsum" id="4UB6"/>
<dbReference type="PDBsum" id="4UB8"/>
<dbReference type="PDBsum" id="5B5E"/>
<dbReference type="PDBsum" id="5B66"/>
<dbReference type="PDBsum" id="5GTH"/>
<dbReference type="PDBsum" id="5GTI"/>
<dbReference type="PDBsum" id="5V2C"/>
<dbReference type="PDBsum" id="5WS5"/>
<dbReference type="PDBsum" id="5WS6"/>
<dbReference type="PDBsum" id="6JLJ"/>
<dbReference type="PDBsum" id="6JLK"/>
<dbReference type="PDBsum" id="6JLL"/>
<dbReference type="PDBsum" id="6JLM"/>
<dbReference type="PDBsum" id="6JLN"/>
<dbReference type="PDBsum" id="6JLO"/>
<dbReference type="PDBsum" id="6JLP"/>
<dbReference type="PDBsum" id="7CJI"/>
<dbReference type="PDBsum" id="7CJJ"/>
<dbReference type="PDBsum" id="7COU"/>
<dbReference type="PDBsum" id="7CZL"/>
<dbReference type="PDBsum" id="7D1T"/>
<dbReference type="PDBsum" id="7D1U"/>
<dbReference type="PDBsum" id="7DXA"/>
<dbReference type="PDBsum" id="7DXH"/>
<dbReference type="PDBsum" id="7EDA"/>
<dbReference type="PDBsum" id="8GN0"/>
<dbReference type="PDBsum" id="8GN1"/>
<dbReference type="PDBsum" id="8GN2"/>
<dbReference type="PDBsum" id="8IR5"/>
<dbReference type="PDBsum" id="8IR6"/>
<dbReference type="PDBsum" id="8IR7"/>
<dbReference type="PDBsum" id="8IR8"/>
<dbReference type="PDBsum" id="8IR9"/>
<dbReference type="PDBsum" id="8IRA"/>
<dbReference type="PDBsum" id="8IRB"/>
<dbReference type="PDBsum" id="8IRC"/>
<dbReference type="PDBsum" id="8IRD"/>
<dbReference type="PDBsum" id="8IRE"/>
<dbReference type="PDBsum" id="8IRF"/>
<dbReference type="PDBsum" id="8IRG"/>
<dbReference type="PDBsum" id="8IRH"/>
<dbReference type="PDBsum" id="8IRI"/>
<dbReference type="EMDB" id="EMD-30511"/>
<dbReference type="EMDB" id="EMD-30547"/>
<dbReference type="EMDB" id="EMD-30548"/>
<dbReference type="EMDB" id="EMD-30902"/>
<dbReference type="EMDB" id="EMD-30909"/>
<dbReference type="EMDB" id="EMD-31062"/>
<dbReference type="SMR" id="D0VWR8"/>
<dbReference type="DIP" id="DIP-61466N"/>
<dbReference type="IntAct" id="D0VWR8">
    <property type="interactions" value="1"/>
</dbReference>
<dbReference type="EvolutionaryTrace" id="D0VWR8"/>
<dbReference type="GO" id="GO:0009523">
    <property type="term" value="C:photosystem II"/>
    <property type="evidence" value="ECO:0007669"/>
    <property type="project" value="UniProtKB-KW"/>
</dbReference>
<dbReference type="GO" id="GO:0031676">
    <property type="term" value="C:plasma membrane-derived thylakoid membrane"/>
    <property type="evidence" value="ECO:0007669"/>
    <property type="project" value="UniProtKB-SubCell"/>
</dbReference>
<dbReference type="GO" id="GO:0016168">
    <property type="term" value="F:chlorophyll binding"/>
    <property type="evidence" value="ECO:0007669"/>
    <property type="project" value="UniProtKB-KW"/>
</dbReference>
<dbReference type="GO" id="GO:0045156">
    <property type="term" value="F:electron transporter, transferring electrons within the cyclic electron transport pathway of photosynthesis activity"/>
    <property type="evidence" value="ECO:0007669"/>
    <property type="project" value="InterPro"/>
</dbReference>
<dbReference type="GO" id="GO:0046872">
    <property type="term" value="F:metal ion binding"/>
    <property type="evidence" value="ECO:0007669"/>
    <property type="project" value="UniProtKB-KW"/>
</dbReference>
<dbReference type="GO" id="GO:0010242">
    <property type="term" value="F:oxygen evolving activity"/>
    <property type="evidence" value="ECO:0007669"/>
    <property type="project" value="UniProtKB-EC"/>
</dbReference>
<dbReference type="GO" id="GO:0009772">
    <property type="term" value="P:photosynthetic electron transport in photosystem II"/>
    <property type="evidence" value="ECO:0007669"/>
    <property type="project" value="InterPro"/>
</dbReference>
<dbReference type="CDD" id="cd09288">
    <property type="entry name" value="Photosystem-II_D2"/>
    <property type="match status" value="1"/>
</dbReference>
<dbReference type="FunFam" id="1.20.85.10:FF:000001">
    <property type="entry name" value="photosystem II D2 protein-like"/>
    <property type="match status" value="1"/>
</dbReference>
<dbReference type="Gene3D" id="1.20.85.10">
    <property type="entry name" value="Photosystem II protein D1-like"/>
    <property type="match status" value="1"/>
</dbReference>
<dbReference type="HAMAP" id="MF_01383">
    <property type="entry name" value="PSII_PsbD_D2"/>
    <property type="match status" value="1"/>
</dbReference>
<dbReference type="InterPro" id="IPR055266">
    <property type="entry name" value="D1/D2"/>
</dbReference>
<dbReference type="InterPro" id="IPR036854">
    <property type="entry name" value="Photo_II_D1/D2_sf"/>
</dbReference>
<dbReference type="InterPro" id="IPR000484">
    <property type="entry name" value="Photo_RC_L/M"/>
</dbReference>
<dbReference type="InterPro" id="IPR055265">
    <property type="entry name" value="Photo_RC_L/M_CS"/>
</dbReference>
<dbReference type="InterPro" id="IPR005868">
    <property type="entry name" value="PSII_PsbD/D2"/>
</dbReference>
<dbReference type="NCBIfam" id="TIGR01152">
    <property type="entry name" value="psbD"/>
    <property type="match status" value="1"/>
</dbReference>
<dbReference type="PANTHER" id="PTHR33149:SF12">
    <property type="entry name" value="PHOTOSYSTEM II D2 PROTEIN"/>
    <property type="match status" value="1"/>
</dbReference>
<dbReference type="PANTHER" id="PTHR33149">
    <property type="entry name" value="PHOTOSYSTEM II PROTEIN D1"/>
    <property type="match status" value="1"/>
</dbReference>
<dbReference type="Pfam" id="PF00124">
    <property type="entry name" value="Photo_RC"/>
    <property type="match status" value="1"/>
</dbReference>
<dbReference type="PRINTS" id="PR00256">
    <property type="entry name" value="REACTNCENTRE"/>
</dbReference>
<dbReference type="SUPFAM" id="SSF81483">
    <property type="entry name" value="Bacterial photosystem II reaction centre, L and M subunits"/>
    <property type="match status" value="1"/>
</dbReference>
<dbReference type="PROSITE" id="PS00244">
    <property type="entry name" value="REACTION_CENTER"/>
    <property type="match status" value="1"/>
</dbReference>
<organism>
    <name type="scientific">Thermostichus vulcanus</name>
    <name type="common">Synechococcus vulcanus</name>
    <dbReference type="NCBI Taxonomy" id="32053"/>
    <lineage>
        <taxon>Bacteria</taxon>
        <taxon>Bacillati</taxon>
        <taxon>Cyanobacteriota</taxon>
        <taxon>Cyanophyceae</taxon>
        <taxon>Thermostichales</taxon>
        <taxon>Thermostichaceae</taxon>
        <taxon>Thermostichus</taxon>
    </lineage>
</organism>